<feature type="chain" id="PRO_1000148862" description="Transcriptional regulator MraZ">
    <location>
        <begin position="1"/>
        <end position="164"/>
    </location>
</feature>
<feature type="domain" description="SpoVT-AbrB 1" evidence="2">
    <location>
        <begin position="7"/>
        <end position="60"/>
    </location>
</feature>
<feature type="domain" description="SpoVT-AbrB 2" evidence="2">
    <location>
        <begin position="83"/>
        <end position="126"/>
    </location>
</feature>
<feature type="region of interest" description="Disordered" evidence="3">
    <location>
        <begin position="144"/>
        <end position="164"/>
    </location>
</feature>
<dbReference type="EMBL" id="CP001280">
    <property type="protein sequence ID" value="ACK52365.1"/>
    <property type="molecule type" value="Genomic_DNA"/>
</dbReference>
<dbReference type="RefSeq" id="WP_012592434.1">
    <property type="nucleotide sequence ID" value="NC_011666.1"/>
</dbReference>
<dbReference type="SMR" id="B8ETL3"/>
<dbReference type="STRING" id="395965.Msil_3476"/>
<dbReference type="KEGG" id="msl:Msil_3476"/>
<dbReference type="eggNOG" id="COG2001">
    <property type="taxonomic scope" value="Bacteria"/>
</dbReference>
<dbReference type="HOGENOM" id="CLU_107907_1_0_5"/>
<dbReference type="OrthoDB" id="9807753at2"/>
<dbReference type="Proteomes" id="UP000002257">
    <property type="component" value="Chromosome"/>
</dbReference>
<dbReference type="GO" id="GO:0005737">
    <property type="term" value="C:cytoplasm"/>
    <property type="evidence" value="ECO:0007669"/>
    <property type="project" value="UniProtKB-UniRule"/>
</dbReference>
<dbReference type="GO" id="GO:0009295">
    <property type="term" value="C:nucleoid"/>
    <property type="evidence" value="ECO:0007669"/>
    <property type="project" value="UniProtKB-SubCell"/>
</dbReference>
<dbReference type="GO" id="GO:0003700">
    <property type="term" value="F:DNA-binding transcription factor activity"/>
    <property type="evidence" value="ECO:0007669"/>
    <property type="project" value="UniProtKB-UniRule"/>
</dbReference>
<dbReference type="GO" id="GO:0000976">
    <property type="term" value="F:transcription cis-regulatory region binding"/>
    <property type="evidence" value="ECO:0007669"/>
    <property type="project" value="TreeGrafter"/>
</dbReference>
<dbReference type="GO" id="GO:2000143">
    <property type="term" value="P:negative regulation of DNA-templated transcription initiation"/>
    <property type="evidence" value="ECO:0007669"/>
    <property type="project" value="TreeGrafter"/>
</dbReference>
<dbReference type="CDD" id="cd16321">
    <property type="entry name" value="MraZ_C"/>
    <property type="match status" value="1"/>
</dbReference>
<dbReference type="CDD" id="cd16320">
    <property type="entry name" value="MraZ_N"/>
    <property type="match status" value="1"/>
</dbReference>
<dbReference type="Gene3D" id="3.40.1550.20">
    <property type="entry name" value="Transcriptional regulator MraZ domain"/>
    <property type="match status" value="1"/>
</dbReference>
<dbReference type="HAMAP" id="MF_01008">
    <property type="entry name" value="MraZ"/>
    <property type="match status" value="1"/>
</dbReference>
<dbReference type="InterPro" id="IPR003444">
    <property type="entry name" value="MraZ"/>
</dbReference>
<dbReference type="InterPro" id="IPR035644">
    <property type="entry name" value="MraZ_C"/>
</dbReference>
<dbReference type="InterPro" id="IPR020603">
    <property type="entry name" value="MraZ_dom"/>
</dbReference>
<dbReference type="InterPro" id="IPR035642">
    <property type="entry name" value="MraZ_N"/>
</dbReference>
<dbReference type="InterPro" id="IPR038619">
    <property type="entry name" value="MraZ_sf"/>
</dbReference>
<dbReference type="InterPro" id="IPR007159">
    <property type="entry name" value="SpoVT-AbrB_dom"/>
</dbReference>
<dbReference type="InterPro" id="IPR037914">
    <property type="entry name" value="SpoVT-AbrB_sf"/>
</dbReference>
<dbReference type="PANTHER" id="PTHR34701">
    <property type="entry name" value="TRANSCRIPTIONAL REGULATOR MRAZ"/>
    <property type="match status" value="1"/>
</dbReference>
<dbReference type="PANTHER" id="PTHR34701:SF1">
    <property type="entry name" value="TRANSCRIPTIONAL REGULATOR MRAZ"/>
    <property type="match status" value="1"/>
</dbReference>
<dbReference type="Pfam" id="PF02381">
    <property type="entry name" value="MraZ"/>
    <property type="match status" value="1"/>
</dbReference>
<dbReference type="SUPFAM" id="SSF89447">
    <property type="entry name" value="AbrB/MazE/MraZ-like"/>
    <property type="match status" value="1"/>
</dbReference>
<dbReference type="PROSITE" id="PS51740">
    <property type="entry name" value="SPOVT_ABRB"/>
    <property type="match status" value="2"/>
</dbReference>
<gene>
    <name evidence="1" type="primary">mraZ</name>
    <name type="ordered locus">Msil_3476</name>
</gene>
<reference key="1">
    <citation type="journal article" date="2010" name="J. Bacteriol.">
        <title>Complete genome sequence of the aerobic facultative methanotroph Methylocella silvestris BL2.</title>
        <authorList>
            <person name="Chen Y."/>
            <person name="Crombie A."/>
            <person name="Rahman M.T."/>
            <person name="Dedysh S.N."/>
            <person name="Liesack W."/>
            <person name="Stott M.B."/>
            <person name="Alam M."/>
            <person name="Theisen A.R."/>
            <person name="Murrell J.C."/>
            <person name="Dunfield P.F."/>
        </authorList>
    </citation>
    <scope>NUCLEOTIDE SEQUENCE [LARGE SCALE GENOMIC DNA]</scope>
    <source>
        <strain>DSM 15510 / CIP 108128 / LMG 27833 / NCIMB 13906 / BL2</strain>
    </source>
</reference>
<sequence length="164" mass="18175">MDGYVSHYTNKLDAKGRVSIPAPFRAVLVRDGFDGLYVHPSIDQEALDCGGHALLREIDGLLSGLSPYSEERDLFSTALIGTSEILKVDSEGRTILTETLKSYAGITGEVTFVGHGHKFQIWEPGRFRAHLEEARNRVRDLRRQLSARHAAPDAPPLRSHGARE</sequence>
<organism>
    <name type="scientific">Methylocella silvestris (strain DSM 15510 / CIP 108128 / LMG 27833 / NCIMB 13906 / BL2)</name>
    <dbReference type="NCBI Taxonomy" id="395965"/>
    <lineage>
        <taxon>Bacteria</taxon>
        <taxon>Pseudomonadati</taxon>
        <taxon>Pseudomonadota</taxon>
        <taxon>Alphaproteobacteria</taxon>
        <taxon>Hyphomicrobiales</taxon>
        <taxon>Beijerinckiaceae</taxon>
        <taxon>Methylocella</taxon>
    </lineage>
</organism>
<proteinExistence type="inferred from homology"/>
<comment type="subunit">
    <text evidence="1">Forms oligomers.</text>
</comment>
<comment type="subcellular location">
    <subcellularLocation>
        <location evidence="1">Cytoplasm</location>
        <location evidence="1">Nucleoid</location>
    </subcellularLocation>
</comment>
<comment type="similarity">
    <text evidence="1">Belongs to the MraZ family.</text>
</comment>
<protein>
    <recommendedName>
        <fullName>Transcriptional regulator MraZ</fullName>
    </recommendedName>
</protein>
<keyword id="KW-0963">Cytoplasm</keyword>
<keyword id="KW-0238">DNA-binding</keyword>
<keyword id="KW-1185">Reference proteome</keyword>
<keyword id="KW-0677">Repeat</keyword>
<keyword id="KW-0804">Transcription</keyword>
<keyword id="KW-0805">Transcription regulation</keyword>
<name>MRAZ_METSB</name>
<accession>B8ETL3</accession>
<evidence type="ECO:0000255" key="1">
    <source>
        <dbReference type="HAMAP-Rule" id="MF_01008"/>
    </source>
</evidence>
<evidence type="ECO:0000255" key="2">
    <source>
        <dbReference type="PROSITE-ProRule" id="PRU01076"/>
    </source>
</evidence>
<evidence type="ECO:0000256" key="3">
    <source>
        <dbReference type="SAM" id="MobiDB-lite"/>
    </source>
</evidence>